<comment type="function">
    <text evidence="1">Hydrolyzes ribosome-free peptidyl-tRNAs (with 1 or more amino acids incorporated), which drop off the ribosome during protein synthesis, or as a result of ribosome stalling.</text>
</comment>
<comment type="function">
    <text evidence="1">Catalyzes the release of premature peptidyl moieties from peptidyl-tRNA molecules trapped in stalled 50S ribosomal subunits, and thus maintains levels of free tRNAs and 50S ribosomes.</text>
</comment>
<comment type="catalytic activity">
    <reaction evidence="1">
        <text>an N-acyl-L-alpha-aminoacyl-tRNA + H2O = an N-acyl-L-amino acid + a tRNA + H(+)</text>
        <dbReference type="Rhea" id="RHEA:54448"/>
        <dbReference type="Rhea" id="RHEA-COMP:10123"/>
        <dbReference type="Rhea" id="RHEA-COMP:13883"/>
        <dbReference type="ChEBI" id="CHEBI:15377"/>
        <dbReference type="ChEBI" id="CHEBI:15378"/>
        <dbReference type="ChEBI" id="CHEBI:59874"/>
        <dbReference type="ChEBI" id="CHEBI:78442"/>
        <dbReference type="ChEBI" id="CHEBI:138191"/>
        <dbReference type="EC" id="3.1.1.29"/>
    </reaction>
</comment>
<comment type="subunit">
    <text evidence="1">Monomer.</text>
</comment>
<comment type="subcellular location">
    <subcellularLocation>
        <location evidence="1">Cytoplasm</location>
    </subcellularLocation>
</comment>
<comment type="similarity">
    <text evidence="1">Belongs to the PTH family.</text>
</comment>
<name>PTH_ACIAD</name>
<organism>
    <name type="scientific">Acinetobacter baylyi (strain ATCC 33305 / BD413 / ADP1)</name>
    <dbReference type="NCBI Taxonomy" id="62977"/>
    <lineage>
        <taxon>Bacteria</taxon>
        <taxon>Pseudomonadati</taxon>
        <taxon>Pseudomonadota</taxon>
        <taxon>Gammaproteobacteria</taxon>
        <taxon>Moraxellales</taxon>
        <taxon>Moraxellaceae</taxon>
        <taxon>Acinetobacter</taxon>
    </lineage>
</organism>
<dbReference type="EC" id="3.1.1.29" evidence="1"/>
<dbReference type="EMBL" id="CR543861">
    <property type="protein sequence ID" value="CAG69628.1"/>
    <property type="molecule type" value="Genomic_DNA"/>
</dbReference>
<dbReference type="RefSeq" id="WP_004929451.1">
    <property type="nucleotide sequence ID" value="NC_005966.1"/>
</dbReference>
<dbReference type="SMR" id="Q6F8I7"/>
<dbReference type="STRING" id="202950.GCA_001485005_02897"/>
<dbReference type="GeneID" id="45235143"/>
<dbReference type="KEGG" id="aci:ACIAD2909"/>
<dbReference type="eggNOG" id="COG0193">
    <property type="taxonomic scope" value="Bacteria"/>
</dbReference>
<dbReference type="HOGENOM" id="CLU_062456_3_1_6"/>
<dbReference type="OrthoDB" id="9800507at2"/>
<dbReference type="BioCyc" id="ASP62977:ACIAD_RS13140-MONOMER"/>
<dbReference type="Proteomes" id="UP000000430">
    <property type="component" value="Chromosome"/>
</dbReference>
<dbReference type="GO" id="GO:0005737">
    <property type="term" value="C:cytoplasm"/>
    <property type="evidence" value="ECO:0007669"/>
    <property type="project" value="UniProtKB-SubCell"/>
</dbReference>
<dbReference type="GO" id="GO:0004045">
    <property type="term" value="F:peptidyl-tRNA hydrolase activity"/>
    <property type="evidence" value="ECO:0007669"/>
    <property type="project" value="UniProtKB-UniRule"/>
</dbReference>
<dbReference type="GO" id="GO:0000049">
    <property type="term" value="F:tRNA binding"/>
    <property type="evidence" value="ECO:0007669"/>
    <property type="project" value="UniProtKB-UniRule"/>
</dbReference>
<dbReference type="GO" id="GO:0006515">
    <property type="term" value="P:protein quality control for misfolded or incompletely synthesized proteins"/>
    <property type="evidence" value="ECO:0007669"/>
    <property type="project" value="UniProtKB-UniRule"/>
</dbReference>
<dbReference type="GO" id="GO:0072344">
    <property type="term" value="P:rescue of stalled ribosome"/>
    <property type="evidence" value="ECO:0007669"/>
    <property type="project" value="UniProtKB-UniRule"/>
</dbReference>
<dbReference type="CDD" id="cd00462">
    <property type="entry name" value="PTH"/>
    <property type="match status" value="1"/>
</dbReference>
<dbReference type="FunFam" id="3.40.50.1470:FF:000001">
    <property type="entry name" value="Peptidyl-tRNA hydrolase"/>
    <property type="match status" value="1"/>
</dbReference>
<dbReference type="Gene3D" id="3.40.50.1470">
    <property type="entry name" value="Peptidyl-tRNA hydrolase"/>
    <property type="match status" value="1"/>
</dbReference>
<dbReference type="HAMAP" id="MF_00083">
    <property type="entry name" value="Pept_tRNA_hydro_bact"/>
    <property type="match status" value="1"/>
</dbReference>
<dbReference type="InterPro" id="IPR001328">
    <property type="entry name" value="Pept_tRNA_hydro"/>
</dbReference>
<dbReference type="InterPro" id="IPR018171">
    <property type="entry name" value="Pept_tRNA_hydro_CS"/>
</dbReference>
<dbReference type="InterPro" id="IPR036416">
    <property type="entry name" value="Pept_tRNA_hydro_sf"/>
</dbReference>
<dbReference type="NCBIfam" id="TIGR00447">
    <property type="entry name" value="pth"/>
    <property type="match status" value="1"/>
</dbReference>
<dbReference type="PANTHER" id="PTHR17224">
    <property type="entry name" value="PEPTIDYL-TRNA HYDROLASE"/>
    <property type="match status" value="1"/>
</dbReference>
<dbReference type="PANTHER" id="PTHR17224:SF1">
    <property type="entry name" value="PEPTIDYL-TRNA HYDROLASE"/>
    <property type="match status" value="1"/>
</dbReference>
<dbReference type="Pfam" id="PF01195">
    <property type="entry name" value="Pept_tRNA_hydro"/>
    <property type="match status" value="1"/>
</dbReference>
<dbReference type="SUPFAM" id="SSF53178">
    <property type="entry name" value="Peptidyl-tRNA hydrolase-like"/>
    <property type="match status" value="1"/>
</dbReference>
<dbReference type="PROSITE" id="PS01195">
    <property type="entry name" value="PEPT_TRNA_HYDROL_1"/>
    <property type="match status" value="1"/>
</dbReference>
<dbReference type="PROSITE" id="PS01196">
    <property type="entry name" value="PEPT_TRNA_HYDROL_2"/>
    <property type="match status" value="1"/>
</dbReference>
<feature type="chain" id="PRO_0000187677" description="Peptidyl-tRNA hydrolase">
    <location>
        <begin position="1"/>
        <end position="193"/>
    </location>
</feature>
<feature type="active site" description="Proton acceptor" evidence="1">
    <location>
        <position position="22"/>
    </location>
</feature>
<feature type="binding site" evidence="1">
    <location>
        <position position="17"/>
    </location>
    <ligand>
        <name>tRNA</name>
        <dbReference type="ChEBI" id="CHEBI:17843"/>
    </ligand>
</feature>
<feature type="binding site" evidence="1">
    <location>
        <position position="68"/>
    </location>
    <ligand>
        <name>tRNA</name>
        <dbReference type="ChEBI" id="CHEBI:17843"/>
    </ligand>
</feature>
<feature type="binding site" evidence="1">
    <location>
        <position position="70"/>
    </location>
    <ligand>
        <name>tRNA</name>
        <dbReference type="ChEBI" id="CHEBI:17843"/>
    </ligand>
</feature>
<feature type="binding site" evidence="1">
    <location>
        <position position="116"/>
    </location>
    <ligand>
        <name>tRNA</name>
        <dbReference type="ChEBI" id="CHEBI:17843"/>
    </ligand>
</feature>
<feature type="site" description="Discriminates between blocked and unblocked aminoacyl-tRNA" evidence="1">
    <location>
        <position position="12"/>
    </location>
</feature>
<feature type="site" description="Stabilizes the basic form of H active site to accept a proton" evidence="1">
    <location>
        <position position="95"/>
    </location>
</feature>
<keyword id="KW-0963">Cytoplasm</keyword>
<keyword id="KW-0378">Hydrolase</keyword>
<keyword id="KW-0694">RNA-binding</keyword>
<keyword id="KW-0820">tRNA-binding</keyword>
<sequence length="193" mass="21211">MSKISLIVGLGNPGAEYAQTRHNAGFWFVEQLADRYNITLKKDPKFHGFSGRGQIEGHDVRLLIPTTFMNRSGQSVVPFSKFYQISPEAILIAHDELDMDPGVIRLKTGGGHGGHNGLRDIVPHIGANFHRLRIGIGHPGSKDRVSGHVLGKAPQNEQTLMEDAIHHALSNTRLLVDGQIAQAMNQINAYKPK</sequence>
<accession>Q6F8I7</accession>
<proteinExistence type="inferred from homology"/>
<reference key="1">
    <citation type="journal article" date="2004" name="Nucleic Acids Res.">
        <title>Unique features revealed by the genome sequence of Acinetobacter sp. ADP1, a versatile and naturally transformation competent bacterium.</title>
        <authorList>
            <person name="Barbe V."/>
            <person name="Vallenet D."/>
            <person name="Fonknechten N."/>
            <person name="Kreimeyer A."/>
            <person name="Oztas S."/>
            <person name="Labarre L."/>
            <person name="Cruveiller S."/>
            <person name="Robert C."/>
            <person name="Duprat S."/>
            <person name="Wincker P."/>
            <person name="Ornston L.N."/>
            <person name="Weissenbach J."/>
            <person name="Marliere P."/>
            <person name="Cohen G.N."/>
            <person name="Medigue C."/>
        </authorList>
    </citation>
    <scope>NUCLEOTIDE SEQUENCE [LARGE SCALE GENOMIC DNA]</scope>
    <source>
        <strain>ATCC 33305 / BD413 / ADP1</strain>
    </source>
</reference>
<protein>
    <recommendedName>
        <fullName evidence="1">Peptidyl-tRNA hydrolase</fullName>
        <shortName evidence="1">Pth</shortName>
        <ecNumber evidence="1">3.1.1.29</ecNumber>
    </recommendedName>
</protein>
<evidence type="ECO:0000255" key="1">
    <source>
        <dbReference type="HAMAP-Rule" id="MF_00083"/>
    </source>
</evidence>
<gene>
    <name evidence="1" type="primary">pth</name>
    <name type="ordered locus">ACIAD2909</name>
</gene>